<dbReference type="EC" id="2.8.1.4" evidence="1"/>
<dbReference type="EMBL" id="CP000560">
    <property type="protein sequence ID" value="ABS75009.1"/>
    <property type="molecule type" value="Genomic_DNA"/>
</dbReference>
<dbReference type="RefSeq" id="WP_007408042.1">
    <property type="nucleotide sequence ID" value="NC_009725.2"/>
</dbReference>
<dbReference type="SMR" id="A7Z7N3"/>
<dbReference type="GeneID" id="93081793"/>
<dbReference type="KEGG" id="bay:RBAM_026510"/>
<dbReference type="HOGENOM" id="CLU_037952_4_0_9"/>
<dbReference type="UniPathway" id="UPA00060"/>
<dbReference type="Proteomes" id="UP000001120">
    <property type="component" value="Chromosome"/>
</dbReference>
<dbReference type="GO" id="GO:0005829">
    <property type="term" value="C:cytosol"/>
    <property type="evidence" value="ECO:0007669"/>
    <property type="project" value="TreeGrafter"/>
</dbReference>
<dbReference type="GO" id="GO:0005524">
    <property type="term" value="F:ATP binding"/>
    <property type="evidence" value="ECO:0007669"/>
    <property type="project" value="UniProtKB-UniRule"/>
</dbReference>
<dbReference type="GO" id="GO:0004810">
    <property type="term" value="F:CCA tRNA nucleotidyltransferase activity"/>
    <property type="evidence" value="ECO:0007669"/>
    <property type="project" value="InterPro"/>
</dbReference>
<dbReference type="GO" id="GO:0000049">
    <property type="term" value="F:tRNA binding"/>
    <property type="evidence" value="ECO:0007669"/>
    <property type="project" value="UniProtKB-UniRule"/>
</dbReference>
<dbReference type="GO" id="GO:0140741">
    <property type="term" value="F:tRNA-uracil-4 sulfurtransferase activity"/>
    <property type="evidence" value="ECO:0007669"/>
    <property type="project" value="UniProtKB-EC"/>
</dbReference>
<dbReference type="GO" id="GO:0009228">
    <property type="term" value="P:thiamine biosynthetic process"/>
    <property type="evidence" value="ECO:0007669"/>
    <property type="project" value="UniProtKB-KW"/>
</dbReference>
<dbReference type="GO" id="GO:0009229">
    <property type="term" value="P:thiamine diphosphate biosynthetic process"/>
    <property type="evidence" value="ECO:0007669"/>
    <property type="project" value="UniProtKB-UniRule"/>
</dbReference>
<dbReference type="GO" id="GO:0052837">
    <property type="term" value="P:thiazole biosynthetic process"/>
    <property type="evidence" value="ECO:0007669"/>
    <property type="project" value="TreeGrafter"/>
</dbReference>
<dbReference type="GO" id="GO:0002937">
    <property type="term" value="P:tRNA 4-thiouridine biosynthesis"/>
    <property type="evidence" value="ECO:0007669"/>
    <property type="project" value="TreeGrafter"/>
</dbReference>
<dbReference type="CDD" id="cd01712">
    <property type="entry name" value="PPase_ThiI"/>
    <property type="match status" value="1"/>
</dbReference>
<dbReference type="CDD" id="cd11716">
    <property type="entry name" value="THUMP_ThiI"/>
    <property type="match status" value="1"/>
</dbReference>
<dbReference type="FunFam" id="3.40.50.620:FF:000053">
    <property type="entry name" value="Probable tRNA sulfurtransferase"/>
    <property type="match status" value="1"/>
</dbReference>
<dbReference type="Gene3D" id="3.30.2130.30">
    <property type="match status" value="1"/>
</dbReference>
<dbReference type="Gene3D" id="3.40.50.620">
    <property type="entry name" value="HUPs"/>
    <property type="match status" value="1"/>
</dbReference>
<dbReference type="HAMAP" id="MF_00021">
    <property type="entry name" value="ThiI"/>
    <property type="match status" value="1"/>
</dbReference>
<dbReference type="InterPro" id="IPR014729">
    <property type="entry name" value="Rossmann-like_a/b/a_fold"/>
</dbReference>
<dbReference type="InterPro" id="IPR020536">
    <property type="entry name" value="ThiI_AANH"/>
</dbReference>
<dbReference type="InterPro" id="IPR054173">
    <property type="entry name" value="ThiI_fer"/>
</dbReference>
<dbReference type="InterPro" id="IPR049961">
    <property type="entry name" value="ThiI_N"/>
</dbReference>
<dbReference type="InterPro" id="IPR004114">
    <property type="entry name" value="THUMP_dom"/>
</dbReference>
<dbReference type="InterPro" id="IPR049962">
    <property type="entry name" value="THUMP_ThiI"/>
</dbReference>
<dbReference type="InterPro" id="IPR003720">
    <property type="entry name" value="tRNA_STrfase"/>
</dbReference>
<dbReference type="InterPro" id="IPR050102">
    <property type="entry name" value="tRNA_sulfurtransferase_ThiI"/>
</dbReference>
<dbReference type="NCBIfam" id="TIGR00342">
    <property type="entry name" value="tRNA uracil 4-sulfurtransferase ThiI"/>
    <property type="match status" value="1"/>
</dbReference>
<dbReference type="PANTHER" id="PTHR43209">
    <property type="entry name" value="TRNA SULFURTRANSFERASE"/>
    <property type="match status" value="1"/>
</dbReference>
<dbReference type="PANTHER" id="PTHR43209:SF1">
    <property type="entry name" value="TRNA SULFURTRANSFERASE"/>
    <property type="match status" value="1"/>
</dbReference>
<dbReference type="Pfam" id="PF02568">
    <property type="entry name" value="ThiI"/>
    <property type="match status" value="1"/>
</dbReference>
<dbReference type="Pfam" id="PF22025">
    <property type="entry name" value="ThiI_fer"/>
    <property type="match status" value="1"/>
</dbReference>
<dbReference type="Pfam" id="PF02926">
    <property type="entry name" value="THUMP"/>
    <property type="match status" value="1"/>
</dbReference>
<dbReference type="SMART" id="SM00981">
    <property type="entry name" value="THUMP"/>
    <property type="match status" value="1"/>
</dbReference>
<dbReference type="SUPFAM" id="SSF52402">
    <property type="entry name" value="Adenine nucleotide alpha hydrolases-like"/>
    <property type="match status" value="1"/>
</dbReference>
<dbReference type="SUPFAM" id="SSF143437">
    <property type="entry name" value="THUMP domain-like"/>
    <property type="match status" value="1"/>
</dbReference>
<dbReference type="PROSITE" id="PS51165">
    <property type="entry name" value="THUMP"/>
    <property type="match status" value="1"/>
</dbReference>
<evidence type="ECO:0000255" key="1">
    <source>
        <dbReference type="HAMAP-Rule" id="MF_00021"/>
    </source>
</evidence>
<feature type="chain" id="PRO_1000074202" description="Probable tRNA sulfurtransferase">
    <location>
        <begin position="1"/>
        <end position="401"/>
    </location>
</feature>
<feature type="domain" description="THUMP" evidence="1">
    <location>
        <begin position="60"/>
        <end position="165"/>
    </location>
</feature>
<feature type="binding site" evidence="1">
    <location>
        <begin position="183"/>
        <end position="184"/>
    </location>
    <ligand>
        <name>ATP</name>
        <dbReference type="ChEBI" id="CHEBI:30616"/>
    </ligand>
</feature>
<feature type="binding site" evidence="1">
    <location>
        <begin position="208"/>
        <end position="209"/>
    </location>
    <ligand>
        <name>ATP</name>
        <dbReference type="ChEBI" id="CHEBI:30616"/>
    </ligand>
</feature>
<feature type="binding site" evidence="1">
    <location>
        <position position="265"/>
    </location>
    <ligand>
        <name>ATP</name>
        <dbReference type="ChEBI" id="CHEBI:30616"/>
    </ligand>
</feature>
<feature type="binding site" evidence="1">
    <location>
        <position position="287"/>
    </location>
    <ligand>
        <name>ATP</name>
        <dbReference type="ChEBI" id="CHEBI:30616"/>
    </ligand>
</feature>
<feature type="binding site" evidence="1">
    <location>
        <position position="296"/>
    </location>
    <ligand>
        <name>ATP</name>
        <dbReference type="ChEBI" id="CHEBI:30616"/>
    </ligand>
</feature>
<organism>
    <name type="scientific">Bacillus velezensis (strain DSM 23117 / BGSC 10A6 / LMG 26770 / FZB42)</name>
    <name type="common">Bacillus amyloliquefaciens subsp. plantarum</name>
    <dbReference type="NCBI Taxonomy" id="326423"/>
    <lineage>
        <taxon>Bacteria</taxon>
        <taxon>Bacillati</taxon>
        <taxon>Bacillota</taxon>
        <taxon>Bacilli</taxon>
        <taxon>Bacillales</taxon>
        <taxon>Bacillaceae</taxon>
        <taxon>Bacillus</taxon>
        <taxon>Bacillus amyloliquefaciens group</taxon>
    </lineage>
</organism>
<accession>A7Z7N3</accession>
<sequence length="401" mass="44924">MNYDHILIRFGEISTKGKNRRSFIERLKQNIRLVLKDYKKVKYFSNRDRMSITLNGENPEEICSLLKNIFGIQSFSLAIKCESKLEDIKKTALAAIEGEYKPGNTFKVETKRAYKQFELDTNAMNAEIGGHILKNTDGLTVDVKHPDIPLRIEIREEATFLTIRNEKGAGGLPVGSAGKAMLMLSGGFDSPVAGFYAMKRGLSVEAVHFFSPPYTSERAKQKVMDLAGCLAKFGGSMTLHIVPFTKTQELIQKQIPENYTMTATRRLMLQIADRIREERKALAIITGESLGQVASQTLESMYAINAVTATPILRPLIGMDKTEIIEKSKEIGTYETSIQPFEDCCTIFTPPSPKTRPKKEKIEHFESFVDFEPLIAEAAAGIETITVYSEQEAHDKFAGLF</sequence>
<gene>
    <name evidence="1" type="primary">thiI</name>
    <name type="ordered locus">RBAM_026510</name>
</gene>
<reference key="1">
    <citation type="journal article" date="2007" name="Nat. Biotechnol.">
        <title>Comparative analysis of the complete genome sequence of the plant growth-promoting bacterium Bacillus amyloliquefaciens FZB42.</title>
        <authorList>
            <person name="Chen X.H."/>
            <person name="Koumoutsi A."/>
            <person name="Scholz R."/>
            <person name="Eisenreich A."/>
            <person name="Schneider K."/>
            <person name="Heinemeyer I."/>
            <person name="Morgenstern B."/>
            <person name="Voss B."/>
            <person name="Hess W.R."/>
            <person name="Reva O."/>
            <person name="Junge H."/>
            <person name="Voigt B."/>
            <person name="Jungblut P.R."/>
            <person name="Vater J."/>
            <person name="Suessmuth R."/>
            <person name="Liesegang H."/>
            <person name="Strittmatter A."/>
            <person name="Gottschalk G."/>
            <person name="Borriss R."/>
        </authorList>
    </citation>
    <scope>NUCLEOTIDE SEQUENCE [LARGE SCALE GENOMIC DNA]</scope>
    <source>
        <strain>DSM 23117 / BGSC 10A6 / LMG 26770 / FZB42</strain>
    </source>
</reference>
<protein>
    <recommendedName>
        <fullName evidence="1">Probable tRNA sulfurtransferase</fullName>
        <ecNumber evidence="1">2.8.1.4</ecNumber>
    </recommendedName>
    <alternativeName>
        <fullName evidence="1">Sulfur carrier protein ThiS sulfurtransferase</fullName>
    </alternativeName>
    <alternativeName>
        <fullName evidence="1">Thiamine biosynthesis protein ThiI</fullName>
    </alternativeName>
    <alternativeName>
        <fullName evidence="1">tRNA 4-thiouridine synthase</fullName>
    </alternativeName>
</protein>
<comment type="function">
    <text evidence="1">Catalyzes the ATP-dependent transfer of a sulfur to tRNA to produce 4-thiouridine in position 8 of tRNAs, which functions as a near-UV photosensor. Also catalyzes the transfer of sulfur to the sulfur carrier protein ThiS, forming ThiS-thiocarboxylate. This is a step in the synthesis of thiazole, in the thiamine biosynthesis pathway. The sulfur is donated as persulfide by IscS.</text>
</comment>
<comment type="catalytic activity">
    <reaction evidence="1">
        <text>[ThiI sulfur-carrier protein]-S-sulfanyl-L-cysteine + a uridine in tRNA + 2 reduced [2Fe-2S]-[ferredoxin] + ATP + H(+) = [ThiI sulfur-carrier protein]-L-cysteine + a 4-thiouridine in tRNA + 2 oxidized [2Fe-2S]-[ferredoxin] + AMP + diphosphate</text>
        <dbReference type="Rhea" id="RHEA:24176"/>
        <dbReference type="Rhea" id="RHEA-COMP:10000"/>
        <dbReference type="Rhea" id="RHEA-COMP:10001"/>
        <dbReference type="Rhea" id="RHEA-COMP:13337"/>
        <dbReference type="Rhea" id="RHEA-COMP:13338"/>
        <dbReference type="Rhea" id="RHEA-COMP:13339"/>
        <dbReference type="Rhea" id="RHEA-COMP:13340"/>
        <dbReference type="ChEBI" id="CHEBI:15378"/>
        <dbReference type="ChEBI" id="CHEBI:29950"/>
        <dbReference type="ChEBI" id="CHEBI:30616"/>
        <dbReference type="ChEBI" id="CHEBI:33019"/>
        <dbReference type="ChEBI" id="CHEBI:33737"/>
        <dbReference type="ChEBI" id="CHEBI:33738"/>
        <dbReference type="ChEBI" id="CHEBI:61963"/>
        <dbReference type="ChEBI" id="CHEBI:65315"/>
        <dbReference type="ChEBI" id="CHEBI:136798"/>
        <dbReference type="ChEBI" id="CHEBI:456215"/>
        <dbReference type="EC" id="2.8.1.4"/>
    </reaction>
</comment>
<comment type="catalytic activity">
    <reaction evidence="1">
        <text>[ThiS sulfur-carrier protein]-C-terminal Gly-Gly-AMP + S-sulfanyl-L-cysteinyl-[cysteine desulfurase] + AH2 = [ThiS sulfur-carrier protein]-C-terminal-Gly-aminoethanethioate + L-cysteinyl-[cysteine desulfurase] + A + AMP + 2 H(+)</text>
        <dbReference type="Rhea" id="RHEA:43340"/>
        <dbReference type="Rhea" id="RHEA-COMP:12157"/>
        <dbReference type="Rhea" id="RHEA-COMP:12158"/>
        <dbReference type="Rhea" id="RHEA-COMP:12910"/>
        <dbReference type="Rhea" id="RHEA-COMP:19908"/>
        <dbReference type="ChEBI" id="CHEBI:13193"/>
        <dbReference type="ChEBI" id="CHEBI:15378"/>
        <dbReference type="ChEBI" id="CHEBI:17499"/>
        <dbReference type="ChEBI" id="CHEBI:29950"/>
        <dbReference type="ChEBI" id="CHEBI:61963"/>
        <dbReference type="ChEBI" id="CHEBI:90618"/>
        <dbReference type="ChEBI" id="CHEBI:232372"/>
        <dbReference type="ChEBI" id="CHEBI:456215"/>
    </reaction>
</comment>
<comment type="pathway">
    <text evidence="1">Cofactor biosynthesis; thiamine diphosphate biosynthesis.</text>
</comment>
<comment type="subcellular location">
    <subcellularLocation>
        <location evidence="1">Cytoplasm</location>
    </subcellularLocation>
</comment>
<comment type="similarity">
    <text evidence="1">Belongs to the ThiI family.</text>
</comment>
<keyword id="KW-0067">ATP-binding</keyword>
<keyword id="KW-0963">Cytoplasm</keyword>
<keyword id="KW-0547">Nucleotide-binding</keyword>
<keyword id="KW-0694">RNA-binding</keyword>
<keyword id="KW-0784">Thiamine biosynthesis</keyword>
<keyword id="KW-0808">Transferase</keyword>
<keyword id="KW-0820">tRNA-binding</keyword>
<name>THII_BACVZ</name>
<proteinExistence type="inferred from homology"/>